<reference key="1">
    <citation type="journal article" date="1996" name="Genomics">
        <title>Isolation and characterization of the human and mouse homologues (SUPT4H and Supt4h) of the yeast SPT4 gene.</title>
        <authorList>
            <person name="Chiang P.-W."/>
            <person name="Wang S.-Q."/>
            <person name="Smithivas P."/>
            <person name="Song W.-J."/>
            <person name="Crombez E."/>
            <person name="Akhtar A."/>
            <person name="Im R."/>
            <person name="Greenfield J."/>
            <person name="Ramamoorthy S."/>
            <person name="van Keuren M.L."/>
            <person name="Blackburn C.C."/>
            <person name="Tsai C.-H."/>
            <person name="Kurnit D.M."/>
        </authorList>
    </citation>
    <scope>NUCLEOTIDE SEQUENCE [MRNA]</scope>
    <scope>TISSUE SPECIFICITY</scope>
    <source>
        <strain>Swiss Webster</strain>
    </source>
</reference>
<reference key="2">
    <citation type="journal article" date="1998" name="Nucleic Acids Res.">
        <title>Comparison of murine Supt4h and a nearly identical expressed, processed gene: evidence of sequence conservation through gene conversion extending into the untranslated regions.</title>
        <authorList>
            <person name="Chiang P.-W."/>
            <person name="Zhang R."/>
            <person name="Stubbs L."/>
            <person name="Zhang L."/>
            <person name="Zhu L."/>
            <person name="Kurnit D.M."/>
        </authorList>
    </citation>
    <scope>NUCLEOTIDE SEQUENCE [GENOMIC DNA]</scope>
    <scope>TISSUE SPECIFICITY</scope>
</reference>
<reference key="3">
    <citation type="journal article" date="2005" name="Science">
        <title>The transcriptional landscape of the mammalian genome.</title>
        <authorList>
            <person name="Carninci P."/>
            <person name="Kasukawa T."/>
            <person name="Katayama S."/>
            <person name="Gough J."/>
            <person name="Frith M.C."/>
            <person name="Maeda N."/>
            <person name="Oyama R."/>
            <person name="Ravasi T."/>
            <person name="Lenhard B."/>
            <person name="Wells C."/>
            <person name="Kodzius R."/>
            <person name="Shimokawa K."/>
            <person name="Bajic V.B."/>
            <person name="Brenner S.E."/>
            <person name="Batalov S."/>
            <person name="Forrest A.R."/>
            <person name="Zavolan M."/>
            <person name="Davis M.J."/>
            <person name="Wilming L.G."/>
            <person name="Aidinis V."/>
            <person name="Allen J.E."/>
            <person name="Ambesi-Impiombato A."/>
            <person name="Apweiler R."/>
            <person name="Aturaliya R.N."/>
            <person name="Bailey T.L."/>
            <person name="Bansal M."/>
            <person name="Baxter L."/>
            <person name="Beisel K.W."/>
            <person name="Bersano T."/>
            <person name="Bono H."/>
            <person name="Chalk A.M."/>
            <person name="Chiu K.P."/>
            <person name="Choudhary V."/>
            <person name="Christoffels A."/>
            <person name="Clutterbuck D.R."/>
            <person name="Crowe M.L."/>
            <person name="Dalla E."/>
            <person name="Dalrymple B.P."/>
            <person name="de Bono B."/>
            <person name="Della Gatta G."/>
            <person name="di Bernardo D."/>
            <person name="Down T."/>
            <person name="Engstrom P."/>
            <person name="Fagiolini M."/>
            <person name="Faulkner G."/>
            <person name="Fletcher C.F."/>
            <person name="Fukushima T."/>
            <person name="Furuno M."/>
            <person name="Futaki S."/>
            <person name="Gariboldi M."/>
            <person name="Georgii-Hemming P."/>
            <person name="Gingeras T.R."/>
            <person name="Gojobori T."/>
            <person name="Green R.E."/>
            <person name="Gustincich S."/>
            <person name="Harbers M."/>
            <person name="Hayashi Y."/>
            <person name="Hensch T.K."/>
            <person name="Hirokawa N."/>
            <person name="Hill D."/>
            <person name="Huminiecki L."/>
            <person name="Iacono M."/>
            <person name="Ikeo K."/>
            <person name="Iwama A."/>
            <person name="Ishikawa T."/>
            <person name="Jakt M."/>
            <person name="Kanapin A."/>
            <person name="Katoh M."/>
            <person name="Kawasawa Y."/>
            <person name="Kelso J."/>
            <person name="Kitamura H."/>
            <person name="Kitano H."/>
            <person name="Kollias G."/>
            <person name="Krishnan S.P."/>
            <person name="Kruger A."/>
            <person name="Kummerfeld S.K."/>
            <person name="Kurochkin I.V."/>
            <person name="Lareau L.F."/>
            <person name="Lazarevic D."/>
            <person name="Lipovich L."/>
            <person name="Liu J."/>
            <person name="Liuni S."/>
            <person name="McWilliam S."/>
            <person name="Madan Babu M."/>
            <person name="Madera M."/>
            <person name="Marchionni L."/>
            <person name="Matsuda H."/>
            <person name="Matsuzawa S."/>
            <person name="Miki H."/>
            <person name="Mignone F."/>
            <person name="Miyake S."/>
            <person name="Morris K."/>
            <person name="Mottagui-Tabar S."/>
            <person name="Mulder N."/>
            <person name="Nakano N."/>
            <person name="Nakauchi H."/>
            <person name="Ng P."/>
            <person name="Nilsson R."/>
            <person name="Nishiguchi S."/>
            <person name="Nishikawa S."/>
            <person name="Nori F."/>
            <person name="Ohara O."/>
            <person name="Okazaki Y."/>
            <person name="Orlando V."/>
            <person name="Pang K.C."/>
            <person name="Pavan W.J."/>
            <person name="Pavesi G."/>
            <person name="Pesole G."/>
            <person name="Petrovsky N."/>
            <person name="Piazza S."/>
            <person name="Reed J."/>
            <person name="Reid J.F."/>
            <person name="Ring B.Z."/>
            <person name="Ringwald M."/>
            <person name="Rost B."/>
            <person name="Ruan Y."/>
            <person name="Salzberg S.L."/>
            <person name="Sandelin A."/>
            <person name="Schneider C."/>
            <person name="Schoenbach C."/>
            <person name="Sekiguchi K."/>
            <person name="Semple C.A."/>
            <person name="Seno S."/>
            <person name="Sessa L."/>
            <person name="Sheng Y."/>
            <person name="Shibata Y."/>
            <person name="Shimada H."/>
            <person name="Shimada K."/>
            <person name="Silva D."/>
            <person name="Sinclair B."/>
            <person name="Sperling S."/>
            <person name="Stupka E."/>
            <person name="Sugiura K."/>
            <person name="Sultana R."/>
            <person name="Takenaka Y."/>
            <person name="Taki K."/>
            <person name="Tammoja K."/>
            <person name="Tan S.L."/>
            <person name="Tang S."/>
            <person name="Taylor M.S."/>
            <person name="Tegner J."/>
            <person name="Teichmann S.A."/>
            <person name="Ueda H.R."/>
            <person name="van Nimwegen E."/>
            <person name="Verardo R."/>
            <person name="Wei C.L."/>
            <person name="Yagi K."/>
            <person name="Yamanishi H."/>
            <person name="Zabarovsky E."/>
            <person name="Zhu S."/>
            <person name="Zimmer A."/>
            <person name="Hide W."/>
            <person name="Bult C."/>
            <person name="Grimmond S.M."/>
            <person name="Teasdale R.D."/>
            <person name="Liu E.T."/>
            <person name="Brusic V."/>
            <person name="Quackenbush J."/>
            <person name="Wahlestedt C."/>
            <person name="Mattick J.S."/>
            <person name="Hume D.A."/>
            <person name="Kai C."/>
            <person name="Sasaki D."/>
            <person name="Tomaru Y."/>
            <person name="Fukuda S."/>
            <person name="Kanamori-Katayama M."/>
            <person name="Suzuki M."/>
            <person name="Aoki J."/>
            <person name="Arakawa T."/>
            <person name="Iida J."/>
            <person name="Imamura K."/>
            <person name="Itoh M."/>
            <person name="Kato T."/>
            <person name="Kawaji H."/>
            <person name="Kawagashira N."/>
            <person name="Kawashima T."/>
            <person name="Kojima M."/>
            <person name="Kondo S."/>
            <person name="Konno H."/>
            <person name="Nakano K."/>
            <person name="Ninomiya N."/>
            <person name="Nishio T."/>
            <person name="Okada M."/>
            <person name="Plessy C."/>
            <person name="Shibata K."/>
            <person name="Shiraki T."/>
            <person name="Suzuki S."/>
            <person name="Tagami M."/>
            <person name="Waki K."/>
            <person name="Watahiki A."/>
            <person name="Okamura-Oho Y."/>
            <person name="Suzuki H."/>
            <person name="Kawai J."/>
            <person name="Hayashizaki Y."/>
        </authorList>
    </citation>
    <scope>NUCLEOTIDE SEQUENCE [LARGE SCALE MRNA]</scope>
    <source>
        <strain>DBA/2J</strain>
    </source>
</reference>
<reference key="4">
    <citation type="journal article" date="2009" name="PLoS Biol.">
        <title>Lineage-specific biology revealed by a finished genome assembly of the mouse.</title>
        <authorList>
            <person name="Church D.M."/>
            <person name="Goodstadt L."/>
            <person name="Hillier L.W."/>
            <person name="Zody M.C."/>
            <person name="Goldstein S."/>
            <person name="She X."/>
            <person name="Bult C.J."/>
            <person name="Agarwala R."/>
            <person name="Cherry J.L."/>
            <person name="DiCuccio M."/>
            <person name="Hlavina W."/>
            <person name="Kapustin Y."/>
            <person name="Meric P."/>
            <person name="Maglott D."/>
            <person name="Birtle Z."/>
            <person name="Marques A.C."/>
            <person name="Graves T."/>
            <person name="Zhou S."/>
            <person name="Teague B."/>
            <person name="Potamousis K."/>
            <person name="Churas C."/>
            <person name="Place M."/>
            <person name="Herschleb J."/>
            <person name="Runnheim R."/>
            <person name="Forrest D."/>
            <person name="Amos-Landgraf J."/>
            <person name="Schwartz D.C."/>
            <person name="Cheng Z."/>
            <person name="Lindblad-Toh K."/>
            <person name="Eichler E.E."/>
            <person name="Ponting C.P."/>
        </authorList>
    </citation>
    <scope>NUCLEOTIDE SEQUENCE [LARGE SCALE GENOMIC DNA]</scope>
    <source>
        <strain>C57BL/6J</strain>
    </source>
</reference>
<reference key="5">
    <citation type="submission" date="2005-07" db="EMBL/GenBank/DDBJ databases">
        <authorList>
            <person name="Mural R.J."/>
            <person name="Adams M.D."/>
            <person name="Myers E.W."/>
            <person name="Smith H.O."/>
            <person name="Venter J.C."/>
        </authorList>
    </citation>
    <scope>NUCLEOTIDE SEQUENCE [LARGE SCALE GENOMIC DNA]</scope>
</reference>
<reference key="6">
    <citation type="journal article" date="2004" name="Genome Res.">
        <title>The status, quality, and expansion of the NIH full-length cDNA project: the Mammalian Gene Collection (MGC).</title>
        <authorList>
            <consortium name="The MGC Project Team"/>
        </authorList>
    </citation>
    <scope>NUCLEOTIDE SEQUENCE [LARGE SCALE MRNA]</scope>
    <source>
        <strain>FVB/N-3</strain>
        <tissue>Brain</tissue>
        <tissue>Liver</tissue>
        <tissue>Mammary tumor</tissue>
    </source>
</reference>
<evidence type="ECO:0000250" key="1"/>
<evidence type="ECO:0000250" key="2">
    <source>
        <dbReference type="UniProtKB" id="P63272"/>
    </source>
</evidence>
<evidence type="ECO:0000255" key="3"/>
<evidence type="ECO:0000269" key="4">
    <source>
    </source>
</evidence>
<evidence type="ECO:0000269" key="5">
    <source>
    </source>
</evidence>
<evidence type="ECO:0000305" key="6"/>
<name>SPT4A_MOUSE</name>
<accession>P63271</accession>
<accession>B2KGH6</accession>
<accession>Q16550</accession>
<accession>Q3TIA2</accession>
<accession>Q5NCP8</accession>
<accession>Q5NCP9</accession>
<accession>Q5NCQ0</accession>
<accession>Q62387</accession>
<sequence>MALETVPKDLRHLRACLLCSLVKTIDQFEYDGCDNCDAYLQMKGNREMVYDCTSSSFDGIIAMMSPEDSWVSKWQRVSNFKPGVYAVSVTGRLPQGIVRELKSRGVAYKSRDTAIKT</sequence>
<keyword id="KW-0007">Acetylation</keyword>
<keyword id="KW-0010">Activator</keyword>
<keyword id="KW-0479">Metal-binding</keyword>
<keyword id="KW-0539">Nucleus</keyword>
<keyword id="KW-1185">Reference proteome</keyword>
<keyword id="KW-0678">Repressor</keyword>
<keyword id="KW-0804">Transcription</keyword>
<keyword id="KW-0805">Transcription regulation</keyword>
<keyword id="KW-0832">Ubl conjugation</keyword>
<keyword id="KW-0862">Zinc</keyword>
<keyword id="KW-0863">Zinc-finger</keyword>
<dbReference type="EMBL" id="U43154">
    <property type="protein sequence ID" value="AAB18730.1"/>
    <property type="molecule type" value="mRNA"/>
</dbReference>
<dbReference type="EMBL" id="U96809">
    <property type="protein sequence ID" value="AAC71659.1"/>
    <property type="molecule type" value="Genomic_DNA"/>
</dbReference>
<dbReference type="EMBL" id="AK167941">
    <property type="protein sequence ID" value="BAE39944.1"/>
    <property type="molecule type" value="mRNA"/>
</dbReference>
<dbReference type="EMBL" id="AL604022">
    <property type="status" value="NOT_ANNOTATED_CDS"/>
    <property type="molecule type" value="Genomic_DNA"/>
</dbReference>
<dbReference type="EMBL" id="CU393486">
    <property type="status" value="NOT_ANNOTATED_CDS"/>
    <property type="molecule type" value="Genomic_DNA"/>
</dbReference>
<dbReference type="EMBL" id="CH466556">
    <property type="protein sequence ID" value="EDL15830.1"/>
    <property type="molecule type" value="Genomic_DNA"/>
</dbReference>
<dbReference type="EMBL" id="BC024391">
    <property type="protein sequence ID" value="AAH24391.1"/>
    <property type="molecule type" value="mRNA"/>
</dbReference>
<dbReference type="EMBL" id="BC061174">
    <property type="protein sequence ID" value="AAH61174.1"/>
    <property type="molecule type" value="mRNA"/>
</dbReference>
<dbReference type="EMBL" id="BC087923">
    <property type="protein sequence ID" value="AAH87923.1"/>
    <property type="molecule type" value="mRNA"/>
</dbReference>
<dbReference type="EMBL" id="BC141092">
    <property type="protein sequence ID" value="AAI41093.1"/>
    <property type="molecule type" value="mRNA"/>
</dbReference>
<dbReference type="CCDS" id="CCDS36270.1"/>
<dbReference type="RefSeq" id="NP_033322.1">
    <property type="nucleotide sequence ID" value="NM_009296.1"/>
</dbReference>
<dbReference type="SMR" id="P63271"/>
<dbReference type="BioGRID" id="203573">
    <property type="interactions" value="2"/>
</dbReference>
<dbReference type="FunCoup" id="P63271">
    <property type="interactions" value="2979"/>
</dbReference>
<dbReference type="IntAct" id="P63271">
    <property type="interactions" value="2"/>
</dbReference>
<dbReference type="STRING" id="10090.ENSMUSP00000091487"/>
<dbReference type="iPTMnet" id="P63271"/>
<dbReference type="PhosphoSitePlus" id="P63271"/>
<dbReference type="jPOST" id="P63271"/>
<dbReference type="PaxDb" id="10090-ENSMUSP00000091487"/>
<dbReference type="PeptideAtlas" id="P63271"/>
<dbReference type="ProteomicsDB" id="261578"/>
<dbReference type="Pumba" id="P63271"/>
<dbReference type="Antibodypedia" id="18387">
    <property type="antibodies" value="170 antibodies from 27 providers"/>
</dbReference>
<dbReference type="DNASU" id="20922"/>
<dbReference type="Ensembl" id="ENSMUST00000093955.12">
    <property type="protein sequence ID" value="ENSMUSP00000091487.6"/>
    <property type="gene ID" value="ENSMUSG00000020485.15"/>
</dbReference>
<dbReference type="GeneID" id="20922"/>
<dbReference type="KEGG" id="mmu:20922"/>
<dbReference type="UCSC" id="uc007kuj.1">
    <property type="organism name" value="mouse"/>
</dbReference>
<dbReference type="AGR" id="MGI:107416"/>
<dbReference type="CTD" id="20922"/>
<dbReference type="MGI" id="MGI:107416">
    <property type="gene designation" value="Supt4a"/>
</dbReference>
<dbReference type="VEuPathDB" id="HostDB:ENSMUSG00000020485"/>
<dbReference type="eggNOG" id="KOG3490">
    <property type="taxonomic scope" value="Eukaryota"/>
</dbReference>
<dbReference type="GeneTree" id="ENSGT00390000018559"/>
<dbReference type="HOGENOM" id="CLU_138052_3_0_1"/>
<dbReference type="InParanoid" id="P63271"/>
<dbReference type="OMA" id="FDGMIAV"/>
<dbReference type="OrthoDB" id="248751at2759"/>
<dbReference type="PhylomeDB" id="P63271"/>
<dbReference type="TreeFam" id="TF300105"/>
<dbReference type="Reactome" id="R-MMU-112382">
    <property type="pathway name" value="Formation of RNA Pol II elongation complex"/>
</dbReference>
<dbReference type="Reactome" id="R-MMU-113418">
    <property type="pathway name" value="Formation of the Early Elongation Complex"/>
</dbReference>
<dbReference type="Reactome" id="R-MMU-674695">
    <property type="pathway name" value="RNA Polymerase II Pre-transcription Events"/>
</dbReference>
<dbReference type="Reactome" id="R-MMU-6796648">
    <property type="pathway name" value="TP53 Regulates Transcription of DNA Repair Genes"/>
</dbReference>
<dbReference type="Reactome" id="R-MMU-6807505">
    <property type="pathway name" value="RNA polymerase II transcribes snRNA genes"/>
</dbReference>
<dbReference type="Reactome" id="R-MMU-75955">
    <property type="pathway name" value="RNA Polymerase II Transcription Elongation"/>
</dbReference>
<dbReference type="BioGRID-ORCS" id="20922">
    <property type="hits" value="22 hits in 81 CRISPR screens"/>
</dbReference>
<dbReference type="ChiTaRS" id="Supt4a">
    <property type="organism name" value="mouse"/>
</dbReference>
<dbReference type="PRO" id="PR:P63271"/>
<dbReference type="Proteomes" id="UP000000589">
    <property type="component" value="Chromosome 11"/>
</dbReference>
<dbReference type="RNAct" id="P63271">
    <property type="molecule type" value="protein"/>
</dbReference>
<dbReference type="Bgee" id="ENSMUSG00000020485">
    <property type="expression patterns" value="Expressed in granulocyte and 80 other cell types or tissues"/>
</dbReference>
<dbReference type="ExpressionAtlas" id="P63271">
    <property type="expression patterns" value="baseline and differential"/>
</dbReference>
<dbReference type="GO" id="GO:0032044">
    <property type="term" value="C:DSIF complex"/>
    <property type="evidence" value="ECO:0000250"/>
    <property type="project" value="UniProtKB"/>
</dbReference>
<dbReference type="GO" id="GO:0046982">
    <property type="term" value="F:protein heterodimerization activity"/>
    <property type="evidence" value="ECO:0007669"/>
    <property type="project" value="Ensembl"/>
</dbReference>
<dbReference type="GO" id="GO:0008270">
    <property type="term" value="F:zinc ion binding"/>
    <property type="evidence" value="ECO:0007669"/>
    <property type="project" value="UniProtKB-KW"/>
</dbReference>
<dbReference type="GO" id="GO:0000122">
    <property type="term" value="P:negative regulation of transcription by RNA polymerase II"/>
    <property type="evidence" value="ECO:0007669"/>
    <property type="project" value="Ensembl"/>
</dbReference>
<dbReference type="GO" id="GO:0034244">
    <property type="term" value="P:negative regulation of transcription elongation by RNA polymerase II"/>
    <property type="evidence" value="ECO:0000315"/>
    <property type="project" value="MGI"/>
</dbReference>
<dbReference type="GO" id="GO:0032786">
    <property type="term" value="P:positive regulation of DNA-templated transcription, elongation"/>
    <property type="evidence" value="ECO:0007669"/>
    <property type="project" value="Ensembl"/>
</dbReference>
<dbReference type="GO" id="GO:0045944">
    <property type="term" value="P:positive regulation of transcription by RNA polymerase II"/>
    <property type="evidence" value="ECO:0007669"/>
    <property type="project" value="Ensembl"/>
</dbReference>
<dbReference type="GO" id="GO:0140673">
    <property type="term" value="P:transcription elongation-coupled chromatin remodeling"/>
    <property type="evidence" value="ECO:0007669"/>
    <property type="project" value="InterPro"/>
</dbReference>
<dbReference type="CDD" id="cd07973">
    <property type="entry name" value="Spt4"/>
    <property type="match status" value="1"/>
</dbReference>
<dbReference type="FunFam" id="3.30.40.210:FF:000006">
    <property type="entry name" value="Transcription elongation factor SPT4"/>
    <property type="match status" value="1"/>
</dbReference>
<dbReference type="Gene3D" id="3.30.40.210">
    <property type="match status" value="1"/>
</dbReference>
<dbReference type="InterPro" id="IPR029040">
    <property type="entry name" value="RPABC4/Spt4"/>
</dbReference>
<dbReference type="InterPro" id="IPR009287">
    <property type="entry name" value="Spt4"/>
</dbReference>
<dbReference type="InterPro" id="IPR022800">
    <property type="entry name" value="Spt4/RpoE2_Znf"/>
</dbReference>
<dbReference type="InterPro" id="IPR038510">
    <property type="entry name" value="Spt4_sf"/>
</dbReference>
<dbReference type="PANTHER" id="PTHR12882">
    <property type="entry name" value="SUPPRESSOR OF TY 4"/>
    <property type="match status" value="1"/>
</dbReference>
<dbReference type="PANTHER" id="PTHR12882:SF1">
    <property type="entry name" value="TRANSCRIPTION ELONGATION FACTOR SPT4"/>
    <property type="match status" value="1"/>
</dbReference>
<dbReference type="Pfam" id="PF06093">
    <property type="entry name" value="Spt4"/>
    <property type="match status" value="1"/>
</dbReference>
<dbReference type="PIRSF" id="PIRSF025023">
    <property type="entry name" value="Spt4"/>
    <property type="match status" value="1"/>
</dbReference>
<dbReference type="SMART" id="SM01389">
    <property type="entry name" value="Spt4"/>
    <property type="match status" value="1"/>
</dbReference>
<dbReference type="SUPFAM" id="SSF63393">
    <property type="entry name" value="RNA polymerase subunits"/>
    <property type="match status" value="1"/>
</dbReference>
<organism>
    <name type="scientific">Mus musculus</name>
    <name type="common">Mouse</name>
    <dbReference type="NCBI Taxonomy" id="10090"/>
    <lineage>
        <taxon>Eukaryota</taxon>
        <taxon>Metazoa</taxon>
        <taxon>Chordata</taxon>
        <taxon>Craniata</taxon>
        <taxon>Vertebrata</taxon>
        <taxon>Euteleostomi</taxon>
        <taxon>Mammalia</taxon>
        <taxon>Eutheria</taxon>
        <taxon>Euarchontoglires</taxon>
        <taxon>Glires</taxon>
        <taxon>Rodentia</taxon>
        <taxon>Myomorpha</taxon>
        <taxon>Muroidea</taxon>
        <taxon>Muridae</taxon>
        <taxon>Murinae</taxon>
        <taxon>Mus</taxon>
        <taxon>Mus</taxon>
    </lineage>
</organism>
<protein>
    <recommendedName>
        <fullName>Transcription elongation factor SPT4-A</fullName>
    </recommendedName>
    <alternativeName>
        <fullName>DRB sensitivity-inducing factor small subunit 1</fullName>
        <shortName>DSIF small subunit 1</shortName>
    </alternativeName>
    <alternativeName>
        <fullName>Transcription elongation factor SPT4 1</fullName>
    </alternativeName>
</protein>
<feature type="initiator methionine" description="Removed" evidence="2">
    <location>
        <position position="1"/>
    </location>
</feature>
<feature type="chain" id="PRO_0000210327" description="Transcription elongation factor SPT4-A">
    <location>
        <begin position="2"/>
        <end position="117"/>
    </location>
</feature>
<feature type="zinc finger region" description="C4-type" evidence="3">
    <location>
        <begin position="16"/>
        <end position="36"/>
    </location>
</feature>
<feature type="region of interest" description="Interaction with SUPT5H" evidence="1">
    <location>
        <begin position="2"/>
        <end position="40"/>
    </location>
</feature>
<feature type="binding site" evidence="2">
    <location>
        <position position="16"/>
    </location>
    <ligand>
        <name>Zn(2+)</name>
        <dbReference type="ChEBI" id="CHEBI:29105"/>
    </ligand>
</feature>
<feature type="binding site" evidence="2">
    <location>
        <position position="19"/>
    </location>
    <ligand>
        <name>Zn(2+)</name>
        <dbReference type="ChEBI" id="CHEBI:29105"/>
    </ligand>
</feature>
<feature type="binding site" evidence="2">
    <location>
        <position position="33"/>
    </location>
    <ligand>
        <name>Zn(2+)</name>
        <dbReference type="ChEBI" id="CHEBI:29105"/>
    </ligand>
</feature>
<feature type="binding site" evidence="2">
    <location>
        <position position="36"/>
    </location>
    <ligand>
        <name>Zn(2+)</name>
        <dbReference type="ChEBI" id="CHEBI:29105"/>
    </ligand>
</feature>
<feature type="modified residue" description="N-acetylalanine" evidence="2">
    <location>
        <position position="2"/>
    </location>
</feature>
<feature type="sequence conflict" description="In Ref. 3; BAE39944." evidence="6" ref="3">
    <original>R</original>
    <variation>L</variation>
    <location>
        <position position="11"/>
    </location>
</feature>
<comment type="function">
    <text evidence="1">Component of the DRB sensitivity-inducing factor complex (DSIF complex), which regulates mRNA processing and transcription elongation by RNA polymerase II. DSIF positively regulates mRNA capping by stimulating the mRNA guanylyltransferase activity of RNGTT/CAP1A. DSIF also acts cooperatively with the negative elongation factor complex (NELF complex) to enhance transcriptional pausing at sites proximal to the promoter. Transcriptional pausing may facilitate the assembly of an elongation competent RNA polymerase II complex. DSIF and NELF promote pausing by inhibition of the transcription elongation factor TFIIS/S-II. TFIIS/S-II binds to RNA polymerase II at transcription pause sites and stimulates the weak intrinsic nuclease activity of the enzyme. Cleavage of blocked transcripts by RNA polymerase II promotes the resumption of transcription from the new 3' terminus and may allow repeated attempts at transcription through natural pause sites (By similarity).</text>
</comment>
<comment type="subunit">
    <text evidence="1">Interacts with SUPT5H to form DSIF. DSIF interacts with the positive transcription elongation factor b complex (P-TEFb complex), which is composed of CDK9 and cyclin-T (CCNT1 or CCNT2). DSIF interacts with RNA polymerase II, and this interaction is reduced by phosphorylation of the C-terminal domain (CTD) of POLR2A by P-TEFb. DSIF also interacts with the NELF complex, which is composed of WHSC2/NELFA, COBRA1/NELFB, TH1L/NELFD and RDBP/NELFE, and this interaction occurs following prior binding of DSIF to RNA polymerase II. DSIF also interacts with HRMT1L2/PRMT1, HTATSF1/TATSF1, RNGTT/CAP1A, SKB1/PRMT5, SUPT6H, and can interact with PIN1 (By similarity).</text>
</comment>
<comment type="subcellular location">
    <subcellularLocation>
        <location evidence="1">Nucleus</location>
    </subcellularLocation>
</comment>
<comment type="tissue specificity">
    <text evidence="4 5">Widely expressed.</text>
</comment>
<comment type="PTM">
    <text evidence="2">Ubiquitinated by Ubr5 when not assembled in the DSIF complex, leading to its degradation: Ubr5 recognizes and binds a degron that is not accessible when Supt4h1a is part of the DSIF complex.</text>
</comment>
<comment type="similarity">
    <text evidence="6">Belongs to the SPT4 family.</text>
</comment>
<proteinExistence type="evidence at transcript level"/>
<gene>
    <name type="primary">Supt4h1a</name>
    <name type="synonym">Spt4h</name>
    <name type="synonym">Supt4a</name>
    <name type="synonym">Supt4h</name>
</gene>